<protein>
    <recommendedName>
        <fullName>Poly-beta-1,6-N-acetyl-D-glucosamine synthase</fullName>
        <shortName>PNAG synthase</shortName>
        <shortName>Poly-beta-1,6-GlcNAc synthase</shortName>
        <ecNumber>2.4.1.-</ecNumber>
    </recommendedName>
    <alternativeName>
        <fullName>Biofilm polysaccharide intercellular adhesin synthesis protein IcaA</fullName>
        <shortName>Biofilm PIA synthesis protein IcaA</shortName>
    </alternativeName>
    <alternativeName>
        <fullName>Intercellular adhesion protein A</fullName>
    </alternativeName>
    <alternativeName>
        <fullName>N-acetylglucosaminyltransferase IcaA</fullName>
    </alternativeName>
</protein>
<keyword id="KW-1003">Cell membrane</keyword>
<keyword id="KW-0328">Glycosyltransferase</keyword>
<keyword id="KW-0472">Membrane</keyword>
<keyword id="KW-0808">Transferase</keyword>
<keyword id="KW-0812">Transmembrane</keyword>
<keyword id="KW-1133">Transmembrane helix</keyword>
<comment type="function">
    <text evidence="1">N-acetylglucosaminyltransferase that catalyzes the polymerization of single monomer units of UDP-N-acetylglucosamine to produce the linear homomer poly-beta-1,6-N-acetyl-D-glucosamine (PNAG, also referred to as PIA), a biofilm adhesin polysaccharide. Requires IcaD for full activity (By similarity).</text>
</comment>
<comment type="subcellular location">
    <subcellularLocation>
        <location evidence="1">Cell membrane</location>
        <topology evidence="1">Multi-pass membrane protein</topology>
    </subcellularLocation>
</comment>
<comment type="similarity">
    <text evidence="3">Belongs to the glycosyltransferase 2 family.</text>
</comment>
<sequence>MQFFNFLLFYPVFMSIYWIVGSIYFYFTREIRYSLNKKPDINVDELEGITFLLACYNESDTIEDTLSNVLALKYEKKEIIIINDGSSDNTAELIYKIKENNDFIFVDLQENRGKANALNQGIKQASYDYVMCLDADTIVDQDAPYYMIENFKHDPKLGAVTGNPRIRNKSSILGKIQTIEYASLIGCIKRSQTLAGAVNTISGVFTLFKKSAVVDVGYWDTDMITEDIAVSWKLHLRGYRIKYEPLAMCWMLVPETLGGLWKQRVRWAQGGHEVLLRDFFSTMKTKRFPLYILMFEQIISILWVYIVLLYLGYLFITANFLDYTFMTYSFSIFLLSSFTMTFINVIQFTVALFIDSRYEKKNMAGLIFVSWYPTVYWIINAAVVLVAFPKALKRKKGGYATWSSPDRGNTQR</sequence>
<gene>
    <name type="primary">icaA</name>
    <name type="ordered locus">MW2586</name>
</gene>
<reference key="1">
    <citation type="journal article" date="2002" name="Lancet">
        <title>Genome and virulence determinants of high virulence community-acquired MRSA.</title>
        <authorList>
            <person name="Baba T."/>
            <person name="Takeuchi F."/>
            <person name="Kuroda M."/>
            <person name="Yuzawa H."/>
            <person name="Aoki K."/>
            <person name="Oguchi A."/>
            <person name="Nagai Y."/>
            <person name="Iwama N."/>
            <person name="Asano K."/>
            <person name="Naimi T."/>
            <person name="Kuroda H."/>
            <person name="Cui L."/>
            <person name="Yamamoto K."/>
            <person name="Hiramatsu K."/>
        </authorList>
    </citation>
    <scope>NUCLEOTIDE SEQUENCE [LARGE SCALE GENOMIC DNA]</scope>
    <source>
        <strain>MW2</strain>
    </source>
</reference>
<dbReference type="EC" id="2.4.1.-"/>
<dbReference type="EMBL" id="BA000033">
    <property type="protein sequence ID" value="BAB96451.1"/>
    <property type="molecule type" value="Genomic_DNA"/>
</dbReference>
<dbReference type="RefSeq" id="WP_001159427.1">
    <property type="nucleotide sequence ID" value="NC_003923.1"/>
</dbReference>
<dbReference type="SMR" id="Q8NUI7"/>
<dbReference type="CAZy" id="GT2">
    <property type="family name" value="Glycosyltransferase Family 2"/>
</dbReference>
<dbReference type="KEGG" id="sam:MW2586"/>
<dbReference type="HOGENOM" id="CLU_023978_0_1_9"/>
<dbReference type="GO" id="GO:0005886">
    <property type="term" value="C:plasma membrane"/>
    <property type="evidence" value="ECO:0007669"/>
    <property type="project" value="UniProtKB-SubCell"/>
</dbReference>
<dbReference type="GO" id="GO:0008375">
    <property type="term" value="F:acetylglucosaminyltransferase activity"/>
    <property type="evidence" value="ECO:0007669"/>
    <property type="project" value="InterPro"/>
</dbReference>
<dbReference type="GO" id="GO:0043708">
    <property type="term" value="P:cell adhesion involved in biofilm formation"/>
    <property type="evidence" value="ECO:0007669"/>
    <property type="project" value="InterPro"/>
</dbReference>
<dbReference type="CDD" id="cd06423">
    <property type="entry name" value="CESA_like"/>
    <property type="match status" value="1"/>
</dbReference>
<dbReference type="Gene3D" id="3.90.550.10">
    <property type="entry name" value="Spore Coat Polysaccharide Biosynthesis Protein SpsA, Chain A"/>
    <property type="match status" value="1"/>
</dbReference>
<dbReference type="InterPro" id="IPR001173">
    <property type="entry name" value="Glyco_trans_2-like"/>
</dbReference>
<dbReference type="InterPro" id="IPR029044">
    <property type="entry name" value="Nucleotide-diphossugar_trans"/>
</dbReference>
<dbReference type="InterPro" id="IPR023853">
    <property type="entry name" value="PGA_PgaC/IcaA"/>
</dbReference>
<dbReference type="NCBIfam" id="TIGR03937">
    <property type="entry name" value="PgaC_IcaA"/>
    <property type="match status" value="1"/>
</dbReference>
<dbReference type="PANTHER" id="PTHR43630">
    <property type="entry name" value="POLY-BETA-1,6-N-ACETYL-D-GLUCOSAMINE SYNTHASE"/>
    <property type="match status" value="1"/>
</dbReference>
<dbReference type="PANTHER" id="PTHR43630:SF1">
    <property type="entry name" value="POLY-BETA-1,6-N-ACETYL-D-GLUCOSAMINE SYNTHASE"/>
    <property type="match status" value="1"/>
</dbReference>
<dbReference type="Pfam" id="PF00535">
    <property type="entry name" value="Glycos_transf_2"/>
    <property type="match status" value="1"/>
</dbReference>
<dbReference type="SUPFAM" id="SSF53448">
    <property type="entry name" value="Nucleotide-diphospho-sugar transferases"/>
    <property type="match status" value="1"/>
</dbReference>
<organism>
    <name type="scientific">Staphylococcus aureus (strain MW2)</name>
    <dbReference type="NCBI Taxonomy" id="196620"/>
    <lineage>
        <taxon>Bacteria</taxon>
        <taxon>Bacillati</taxon>
        <taxon>Bacillota</taxon>
        <taxon>Bacilli</taxon>
        <taxon>Bacillales</taxon>
        <taxon>Staphylococcaceae</taxon>
        <taxon>Staphylococcus</taxon>
    </lineage>
</organism>
<accession>Q8NUI7</accession>
<proteinExistence type="inferred from homology"/>
<name>ICAA_STAAW</name>
<evidence type="ECO:0000250" key="1"/>
<evidence type="ECO:0000255" key="2"/>
<evidence type="ECO:0000305" key="3"/>
<feature type="chain" id="PRO_0000059281" description="Poly-beta-1,6-N-acetyl-D-glucosamine synthase">
    <location>
        <begin position="1"/>
        <end position="412"/>
    </location>
</feature>
<feature type="transmembrane region" description="Helical" evidence="2">
    <location>
        <begin position="6"/>
        <end position="28"/>
    </location>
</feature>
<feature type="transmembrane region" description="Helical" evidence="2">
    <location>
        <begin position="290"/>
        <end position="312"/>
    </location>
</feature>
<feature type="transmembrane region" description="Helical" evidence="2">
    <location>
        <begin position="332"/>
        <end position="354"/>
    </location>
</feature>
<feature type="transmembrane region" description="Helical" evidence="2">
    <location>
        <begin position="366"/>
        <end position="388"/>
    </location>
</feature>